<proteinExistence type="inferred from homology"/>
<protein>
    <recommendedName>
        <fullName evidence="1">YcgL domain-containing protein PLES_38871</fullName>
    </recommendedName>
</protein>
<reference key="1">
    <citation type="journal article" date="2009" name="Genome Res.">
        <title>Newly introduced genomic prophage islands are critical determinants of in vivo competitiveness in the Liverpool epidemic strain of Pseudomonas aeruginosa.</title>
        <authorList>
            <person name="Winstanley C."/>
            <person name="Langille M.G.I."/>
            <person name="Fothergill J.L."/>
            <person name="Kukavica-Ibrulj I."/>
            <person name="Paradis-Bleau C."/>
            <person name="Sanschagrin F."/>
            <person name="Thomson N.R."/>
            <person name="Winsor G.L."/>
            <person name="Quail M.A."/>
            <person name="Lennard N."/>
            <person name="Bignell A."/>
            <person name="Clarke L."/>
            <person name="Seeger K."/>
            <person name="Saunders D."/>
            <person name="Harris D."/>
            <person name="Parkhill J."/>
            <person name="Hancock R.E.W."/>
            <person name="Brinkman F.S.L."/>
            <person name="Levesque R.C."/>
        </authorList>
    </citation>
    <scope>NUCLEOTIDE SEQUENCE [LARGE SCALE GENOMIC DNA]</scope>
    <source>
        <strain>LESB58</strain>
    </source>
</reference>
<accession>B7UW25</accession>
<evidence type="ECO:0000255" key="1">
    <source>
        <dbReference type="HAMAP-Rule" id="MF_01866"/>
    </source>
</evidence>
<dbReference type="EMBL" id="FM209186">
    <property type="protein sequence ID" value="CAW28622.1"/>
    <property type="molecule type" value="Genomic_DNA"/>
</dbReference>
<dbReference type="RefSeq" id="WP_003082651.1">
    <property type="nucleotide sequence ID" value="NC_011770.1"/>
</dbReference>
<dbReference type="SMR" id="B7UW25"/>
<dbReference type="KEGG" id="pag:PLES_38871"/>
<dbReference type="HOGENOM" id="CLU_155118_2_0_6"/>
<dbReference type="Gene3D" id="3.10.510.20">
    <property type="entry name" value="YcgL domain"/>
    <property type="match status" value="1"/>
</dbReference>
<dbReference type="HAMAP" id="MF_01866">
    <property type="entry name" value="UPF0745"/>
    <property type="match status" value="1"/>
</dbReference>
<dbReference type="InterPro" id="IPR038068">
    <property type="entry name" value="YcgL-like_sf"/>
</dbReference>
<dbReference type="InterPro" id="IPR027354">
    <property type="entry name" value="YcgL_dom"/>
</dbReference>
<dbReference type="PANTHER" id="PTHR38109">
    <property type="entry name" value="PROTEIN YCGL"/>
    <property type="match status" value="1"/>
</dbReference>
<dbReference type="PANTHER" id="PTHR38109:SF1">
    <property type="entry name" value="PROTEIN YCGL"/>
    <property type="match status" value="1"/>
</dbReference>
<dbReference type="Pfam" id="PF05166">
    <property type="entry name" value="YcgL"/>
    <property type="match status" value="1"/>
</dbReference>
<dbReference type="SUPFAM" id="SSF160191">
    <property type="entry name" value="YcgL-like"/>
    <property type="match status" value="1"/>
</dbReference>
<dbReference type="PROSITE" id="PS51648">
    <property type="entry name" value="YCGL"/>
    <property type="match status" value="1"/>
</dbReference>
<name>Y3887_PSEA8</name>
<feature type="chain" id="PRO_0000375328" description="YcgL domain-containing protein PLES_38871">
    <location>
        <begin position="1"/>
        <end position="97"/>
    </location>
</feature>
<feature type="domain" description="YcgL" evidence="1">
    <location>
        <begin position="3"/>
        <end position="87"/>
    </location>
</feature>
<gene>
    <name type="ordered locus">PLES_38871</name>
</gene>
<sequence length="97" mass="11388">MKRICSVYKSPRKNEMYLYVDKREALSRVPEALLVPFGAPQHVFDLLLTPERQLAREDVAKVLENIEKQGFHLQMPPGEEEYIEHLPEELLRMNDPL</sequence>
<organism>
    <name type="scientific">Pseudomonas aeruginosa (strain LESB58)</name>
    <dbReference type="NCBI Taxonomy" id="557722"/>
    <lineage>
        <taxon>Bacteria</taxon>
        <taxon>Pseudomonadati</taxon>
        <taxon>Pseudomonadota</taxon>
        <taxon>Gammaproteobacteria</taxon>
        <taxon>Pseudomonadales</taxon>
        <taxon>Pseudomonadaceae</taxon>
        <taxon>Pseudomonas</taxon>
    </lineage>
</organism>